<sequence length="825" mass="92566">MAAGKFASLPRNMPVNHQFPLASSMDLLSSRSPLAEHRPDAYQDVSIHGTLPRKKKGPPPIRSCDDFSHMGTLPHSKSPRQNSPVTQDGIQESPWQDRHGETFTFRDPHLLDPTVEYVKFSKERHIMDRTPEKLKKELEEELLLSSEDLRSHAWYHGRIPRQVSENLVQRDGDFLVRDSLSSPGNFVLTCQWKNLAQHFKINRTVLRLSEAYSRVQYQFEMESFDSIPGLVRCYVGNRRPISQQSGAIIFQPINRTVPLRCLEEHYGTSPGQAREGSLTKGRPDVAKRLSLTMGGVQAREQNLPRGNLLRNKEKSGSQPACLDHMQDRRALSLKAHQSESYLPIGCKLPPQSSGVDTSPCPNSPVFRTGSEPALSPAVVRRVSSDARAGEALRGSDSQLCPKPPPKPCKVPFLKVPSSPSAWLNSEANYCELNPAFATGCGRGAKLPSCAQGSHTELLTAKQNEAPGPRNSGVNYLILDDDDRERPWEPAAAQMEKGQWDKGEFVTPLLETVSSFRPNEFESKFLPPENKPLETAMLKRAKELFTNNDPKVIAQHVLSMDCRVARILGVSEEMRRNMGVSSGLELITLPHGHQLRLDIIERHNTMAIGIAVDILGCTGTLEDRAATLSKIIQVAVELKDSMGDLYSFSALMKALEMPQITRLEKTWTALRHQYTQTAILYEKQLKPFSKLLHEGRESTCVPPNNVSVPLLMPLVTLMERQAVTFEGTDMWEKNDQSCEIMLNHLATARFMAEAADSYRMNAERILAGFQPDEEMNEICKTEFQMRLLWGSKGAQVNQTERYEKFNQILTALSRKLEPPPVKQAEL</sequence>
<protein>
    <recommendedName>
        <fullName>Breast cancer anti-estrogen resistance protein 3</fullName>
    </recommendedName>
    <alternativeName>
        <fullName>Novel SH2-containing protein 2</fullName>
    </alternativeName>
    <alternativeName>
        <fullName>SH2 domain-containing protein 3B</fullName>
    </alternativeName>
</protein>
<organism>
    <name type="scientific">Homo sapiens</name>
    <name type="common">Human</name>
    <dbReference type="NCBI Taxonomy" id="9606"/>
    <lineage>
        <taxon>Eukaryota</taxon>
        <taxon>Metazoa</taxon>
        <taxon>Chordata</taxon>
        <taxon>Craniata</taxon>
        <taxon>Vertebrata</taxon>
        <taxon>Euteleostomi</taxon>
        <taxon>Mammalia</taxon>
        <taxon>Eutheria</taxon>
        <taxon>Euarchontoglires</taxon>
        <taxon>Primates</taxon>
        <taxon>Haplorrhini</taxon>
        <taxon>Catarrhini</taxon>
        <taxon>Hominidae</taxon>
        <taxon>Homo</taxon>
    </lineage>
</organism>
<feature type="initiator methionine" description="Removed" evidence="21">
    <location>
        <position position="1"/>
    </location>
</feature>
<feature type="chain" id="PRO_0000230284" description="Breast cancer anti-estrogen resistance protein 3">
    <location>
        <begin position="2"/>
        <end position="825"/>
    </location>
</feature>
<feature type="domain" description="SH2" evidence="4">
    <location>
        <begin position="154"/>
        <end position="253"/>
    </location>
</feature>
<feature type="domain" description="Ras-GEF" evidence="3">
    <location>
        <begin position="548"/>
        <end position="818"/>
    </location>
</feature>
<feature type="region of interest" description="Disordered" evidence="5">
    <location>
        <begin position="40"/>
        <end position="106"/>
    </location>
</feature>
<feature type="region of interest" description="Mediates the interaction with BCAR1/p130CAS" evidence="17">
    <location>
        <begin position="744"/>
        <end position="748"/>
    </location>
</feature>
<feature type="compositionally biased region" description="Polar residues" evidence="5">
    <location>
        <begin position="79"/>
        <end position="94"/>
    </location>
</feature>
<feature type="compositionally biased region" description="Basic and acidic residues" evidence="5">
    <location>
        <begin position="95"/>
        <end position="106"/>
    </location>
</feature>
<feature type="site" description="Required for interaction with NEDD9" evidence="2">
    <location>
        <position position="748"/>
    </location>
</feature>
<feature type="modified residue" description="N-acetylalanine" evidence="21">
    <location>
        <position position="2"/>
    </location>
</feature>
<feature type="modified residue" description="Phosphoserine" evidence="20">
    <location>
        <position position="32"/>
    </location>
</feature>
<feature type="modified residue" description="Phosphoserine" evidence="22">
    <location>
        <position position="78"/>
    </location>
</feature>
<feature type="modified residue" description="Phosphoserine" evidence="20">
    <location>
        <position position="83"/>
    </location>
</feature>
<feature type="modified residue" description="Phosphoserine" evidence="19">
    <location>
        <position position="182"/>
    </location>
</feature>
<feature type="modified residue" description="Phosphoserine" evidence="20">
    <location>
        <position position="290"/>
    </location>
</feature>
<feature type="modified residue" description="N6-methyllysine" evidence="23">
    <location>
        <position position="334"/>
    </location>
</feature>
<feature type="modified residue" description="Phosphoserine" evidence="20">
    <location>
        <position position="358"/>
    </location>
</feature>
<feature type="modified residue" description="Phosphoserine" evidence="20">
    <location>
        <position position="363"/>
    </location>
</feature>
<feature type="modified residue" description="Phosphoserine" evidence="19 20 22">
    <location>
        <position position="375"/>
    </location>
</feature>
<feature type="modified residue" description="Omega-N-methylarginine" evidence="23">
    <location>
        <position position="442"/>
    </location>
</feature>
<feature type="modified residue" description="Phosphoserine" evidence="2">
    <location>
        <position position="471"/>
    </location>
</feature>
<feature type="splice variant" id="VSP_017814" description="In isoform 2." evidence="14">
    <location>
        <begin position="1"/>
        <end position="324"/>
    </location>
</feature>
<feature type="splice variant" id="VSP_046716" description="In isoform 3." evidence="15">
    <location>
        <begin position="1"/>
        <end position="91"/>
    </location>
</feature>
<feature type="splice variant" id="VSP_046717" description="In isoform 3." evidence="15">
    <original>ESPWQDRHGETFTFRDPHLLDPTVEY</original>
    <variation>MPKECSAFHALSAALCCFYHRKSFIG</variation>
    <location>
        <begin position="92"/>
        <end position="117"/>
    </location>
</feature>
<feature type="sequence variant" id="VAR_050689" description="In dbSNP:rs12062278.">
    <original>E</original>
    <variation>G</variation>
    <location>
        <position position="464"/>
    </location>
</feature>
<feature type="sequence variant" id="VAR_050690" description="In dbSNP:rs17110107.">
    <original>Q</original>
    <variation>H</variation>
    <location>
        <position position="593"/>
    </location>
</feature>
<feature type="mutagenesis site" description="Abolishes localization to focal adhesions. Reduces interaction with PTPRA." evidence="11">
    <original>R</original>
    <variation>K</variation>
    <location>
        <position position="177"/>
    </location>
</feature>
<feature type="mutagenesis site" description="Weakens interaction with BCAR1." evidence="10">
    <original>L</original>
    <variation>E</variation>
    <location>
        <position position="744"/>
    </location>
</feature>
<feature type="mutagenesis site" description="Abolishes interaction with BCAR1 and SRC." evidence="10 11">
    <original>R</original>
    <variation>A</variation>
    <location>
        <position position="748"/>
    </location>
</feature>
<feature type="sequence conflict" description="In Ref. 4; AL833121." evidence="16" ref="4">
    <original>E</original>
    <variation>G</variation>
    <location>
        <position position="519"/>
    </location>
</feature>
<feature type="sequence conflict" description="In Ref. 4; AL833121." evidence="16" ref="4">
    <original>L</original>
    <variation>P</variation>
    <location>
        <position position="543"/>
    </location>
</feature>
<feature type="helix" evidence="24">
    <location>
        <begin position="517"/>
        <end position="519"/>
    </location>
</feature>
<feature type="helix" evidence="24">
    <location>
        <begin position="534"/>
        <end position="546"/>
    </location>
</feature>
<feature type="helix" evidence="24">
    <location>
        <begin position="549"/>
        <end position="563"/>
    </location>
</feature>
<feature type="helix" evidence="24">
    <location>
        <begin position="571"/>
        <end position="577"/>
    </location>
</feature>
<feature type="strand" evidence="24">
    <location>
        <begin position="578"/>
        <end position="580"/>
    </location>
</feature>
<feature type="helix" evidence="24">
    <location>
        <begin position="582"/>
        <end position="585"/>
    </location>
</feature>
<feature type="helix" evidence="24">
    <location>
        <begin position="589"/>
        <end position="591"/>
    </location>
</feature>
<feature type="helix" evidence="24">
    <location>
        <begin position="592"/>
        <end position="614"/>
    </location>
</feature>
<feature type="helix" evidence="24">
    <location>
        <begin position="620"/>
        <end position="639"/>
    </location>
</feature>
<feature type="helix" evidence="24">
    <location>
        <begin position="644"/>
        <end position="655"/>
    </location>
</feature>
<feature type="helix" evidence="24">
    <location>
        <begin position="657"/>
        <end position="660"/>
    </location>
</feature>
<feature type="helix" evidence="24">
    <location>
        <begin position="663"/>
        <end position="672"/>
    </location>
</feature>
<feature type="helix" evidence="24">
    <location>
        <begin position="674"/>
        <end position="682"/>
    </location>
</feature>
<feature type="helix" evidence="24">
    <location>
        <begin position="684"/>
        <end position="692"/>
    </location>
</feature>
<feature type="helix" evidence="24">
    <location>
        <begin position="696"/>
        <end position="698"/>
    </location>
</feature>
<feature type="helix" evidence="24">
    <location>
        <begin position="711"/>
        <end position="717"/>
    </location>
</feature>
<feature type="helix" evidence="24">
    <location>
        <begin position="724"/>
        <end position="726"/>
    </location>
</feature>
<feature type="helix" evidence="24">
    <location>
        <begin position="732"/>
        <end position="734"/>
    </location>
</feature>
<feature type="helix" evidence="24">
    <location>
        <begin position="737"/>
        <end position="752"/>
    </location>
</feature>
<feature type="helix" evidence="24">
    <location>
        <begin position="754"/>
        <end position="764"/>
    </location>
</feature>
<feature type="turn" evidence="24">
    <location>
        <begin position="765"/>
        <end position="767"/>
    </location>
</feature>
<feature type="helix" evidence="24">
    <location>
        <begin position="772"/>
        <end position="777"/>
    </location>
</feature>
<feature type="helix" evidence="24">
    <location>
        <begin position="780"/>
        <end position="792"/>
    </location>
</feature>
<feature type="helix" evidence="24">
    <location>
        <begin position="797"/>
        <end position="815"/>
    </location>
</feature>
<evidence type="ECO:0000250" key="1">
    <source>
        <dbReference type="UniProtKB" id="D3ZAZ5"/>
    </source>
</evidence>
<evidence type="ECO:0000250" key="2">
    <source>
        <dbReference type="UniProtKB" id="Q9QZK2"/>
    </source>
</evidence>
<evidence type="ECO:0000255" key="3">
    <source>
        <dbReference type="PROSITE-ProRule" id="PRU00168"/>
    </source>
</evidence>
<evidence type="ECO:0000255" key="4">
    <source>
        <dbReference type="PROSITE-ProRule" id="PRU00191"/>
    </source>
</evidence>
<evidence type="ECO:0000256" key="5">
    <source>
        <dbReference type="SAM" id="MobiDB-lite"/>
    </source>
</evidence>
<evidence type="ECO:0000269" key="6">
    <source>
    </source>
</evidence>
<evidence type="ECO:0000269" key="7">
    <source>
    </source>
</evidence>
<evidence type="ECO:0000269" key="8">
    <source>
    </source>
</evidence>
<evidence type="ECO:0000269" key="9">
    <source>
    </source>
</evidence>
<evidence type="ECO:0000269" key="10">
    <source>
    </source>
</evidence>
<evidence type="ECO:0000269" key="11">
    <source>
    </source>
</evidence>
<evidence type="ECO:0000269" key="12">
    <source>
    </source>
</evidence>
<evidence type="ECO:0000269" key="13">
    <source>
    </source>
</evidence>
<evidence type="ECO:0000303" key="14">
    <source>
    </source>
</evidence>
<evidence type="ECO:0000303" key="15">
    <source>
    </source>
</evidence>
<evidence type="ECO:0000305" key="16"/>
<evidence type="ECO:0000305" key="17">
    <source>
    </source>
</evidence>
<evidence type="ECO:0007744" key="18">
    <source>
        <dbReference type="PDB" id="3T6A"/>
    </source>
</evidence>
<evidence type="ECO:0007744" key="19">
    <source>
    </source>
</evidence>
<evidence type="ECO:0007744" key="20">
    <source>
    </source>
</evidence>
<evidence type="ECO:0007744" key="21">
    <source>
    </source>
</evidence>
<evidence type="ECO:0007744" key="22">
    <source>
    </source>
</evidence>
<evidence type="ECO:0007744" key="23">
    <source>
    </source>
</evidence>
<evidence type="ECO:0007829" key="24">
    <source>
        <dbReference type="PDB" id="3T6A"/>
    </source>
</evidence>
<gene>
    <name type="primary">BCAR3</name>
    <name type="synonym">NSP2</name>
    <name type="synonym">SH2D3B</name>
    <name type="ORF">UNQ271/PRO308</name>
</gene>
<reference key="1">
    <citation type="journal article" date="1998" name="EMBO J.">
        <title>Identification of BCAR3 by a random search for genes involved in antiestrogen resistance of human breast cancer cells.</title>
        <authorList>
            <person name="van Agthoven T."/>
            <person name="van Agthoven T.L.A."/>
            <person name="Dekker A."/>
            <person name="van der Spek P.J."/>
            <person name="Vreede L."/>
            <person name="Dorssers L.C.J."/>
        </authorList>
    </citation>
    <scope>NUCLEOTIDE SEQUENCE [MRNA] (ISOFORM 1)</scope>
    <scope>TISSUE SPECIFICITY</scope>
    <source>
        <tissue>Testis</tissue>
    </source>
</reference>
<reference key="2">
    <citation type="journal article" date="1999" name="J. Biol. Chem.">
        <title>NSP1 defines a novel family of adaptor proteins linking integrin and tyrosine kinase receptors to the c-Jun N-terminal kinase/stress-activated protein kinase signaling pathway.</title>
        <authorList>
            <person name="Lu Y."/>
            <person name="Brush J."/>
            <person name="Stewart T.A."/>
        </authorList>
    </citation>
    <scope>NUCLEOTIDE SEQUENCE [MRNA] (ISOFORM 1)</scope>
    <scope>TISSUE SPECIFICITY</scope>
    <source>
        <tissue>Kidney</tissue>
    </source>
</reference>
<reference key="3">
    <citation type="journal article" date="2003" name="Genome Res.">
        <title>The secreted protein discovery initiative (SPDI), a large-scale effort to identify novel human secreted and transmembrane proteins: a bioinformatics assessment.</title>
        <authorList>
            <person name="Clark H.F."/>
            <person name="Gurney A.L."/>
            <person name="Abaya E."/>
            <person name="Baker K."/>
            <person name="Baldwin D.T."/>
            <person name="Brush J."/>
            <person name="Chen J."/>
            <person name="Chow B."/>
            <person name="Chui C."/>
            <person name="Crowley C."/>
            <person name="Currell B."/>
            <person name="Deuel B."/>
            <person name="Dowd P."/>
            <person name="Eaton D."/>
            <person name="Foster J.S."/>
            <person name="Grimaldi C."/>
            <person name="Gu Q."/>
            <person name="Hass P.E."/>
            <person name="Heldens S."/>
            <person name="Huang A."/>
            <person name="Kim H.S."/>
            <person name="Klimowski L."/>
            <person name="Jin Y."/>
            <person name="Johnson S."/>
            <person name="Lee J."/>
            <person name="Lewis L."/>
            <person name="Liao D."/>
            <person name="Mark M.R."/>
            <person name="Robbie E."/>
            <person name="Sanchez C."/>
            <person name="Schoenfeld J."/>
            <person name="Seshagiri S."/>
            <person name="Simmons L."/>
            <person name="Singh J."/>
            <person name="Smith V."/>
            <person name="Stinson J."/>
            <person name="Vagts A."/>
            <person name="Vandlen R.L."/>
            <person name="Watanabe C."/>
            <person name="Wieand D."/>
            <person name="Woods K."/>
            <person name="Xie M.-H."/>
            <person name="Yansura D.G."/>
            <person name="Yi S."/>
            <person name="Yu G."/>
            <person name="Yuan J."/>
            <person name="Zhang M."/>
            <person name="Zhang Z."/>
            <person name="Goddard A.D."/>
            <person name="Wood W.I."/>
            <person name="Godowski P.J."/>
            <person name="Gray A.M."/>
        </authorList>
    </citation>
    <scope>NUCLEOTIDE SEQUENCE [LARGE SCALE MRNA] (ISOFORM 2)</scope>
</reference>
<reference key="4">
    <citation type="journal article" date="2007" name="BMC Genomics">
        <title>The full-ORF clone resource of the German cDNA consortium.</title>
        <authorList>
            <person name="Bechtel S."/>
            <person name="Rosenfelder H."/>
            <person name="Duda A."/>
            <person name="Schmidt C.P."/>
            <person name="Ernst U."/>
            <person name="Wellenreuther R."/>
            <person name="Mehrle A."/>
            <person name="Schuster C."/>
            <person name="Bahr A."/>
            <person name="Bloecker H."/>
            <person name="Heubner D."/>
            <person name="Hoerlein A."/>
            <person name="Michel G."/>
            <person name="Wedler H."/>
            <person name="Koehrer K."/>
            <person name="Ottenwaelder B."/>
            <person name="Poustka A."/>
            <person name="Wiemann S."/>
            <person name="Schupp I."/>
        </authorList>
    </citation>
    <scope>NUCLEOTIDE SEQUENCE [LARGE SCALE MRNA] (ISOFORM 3)</scope>
    <source>
        <tissue>Heart</tissue>
    </source>
</reference>
<reference key="5">
    <citation type="journal article" date="2006" name="Nature">
        <title>The DNA sequence and biological annotation of human chromosome 1.</title>
        <authorList>
            <person name="Gregory S.G."/>
            <person name="Barlow K.F."/>
            <person name="McLay K.E."/>
            <person name="Kaul R."/>
            <person name="Swarbreck D."/>
            <person name="Dunham A."/>
            <person name="Scott C.E."/>
            <person name="Howe K.L."/>
            <person name="Woodfine K."/>
            <person name="Spencer C.C.A."/>
            <person name="Jones M.C."/>
            <person name="Gillson C."/>
            <person name="Searle S."/>
            <person name="Zhou Y."/>
            <person name="Kokocinski F."/>
            <person name="McDonald L."/>
            <person name="Evans R."/>
            <person name="Phillips K."/>
            <person name="Atkinson A."/>
            <person name="Cooper R."/>
            <person name="Jones C."/>
            <person name="Hall R.E."/>
            <person name="Andrews T.D."/>
            <person name="Lloyd C."/>
            <person name="Ainscough R."/>
            <person name="Almeida J.P."/>
            <person name="Ambrose K.D."/>
            <person name="Anderson F."/>
            <person name="Andrew R.W."/>
            <person name="Ashwell R.I.S."/>
            <person name="Aubin K."/>
            <person name="Babbage A.K."/>
            <person name="Bagguley C.L."/>
            <person name="Bailey J."/>
            <person name="Beasley H."/>
            <person name="Bethel G."/>
            <person name="Bird C.P."/>
            <person name="Bray-Allen S."/>
            <person name="Brown J.Y."/>
            <person name="Brown A.J."/>
            <person name="Buckley D."/>
            <person name="Burton J."/>
            <person name="Bye J."/>
            <person name="Carder C."/>
            <person name="Chapman J.C."/>
            <person name="Clark S.Y."/>
            <person name="Clarke G."/>
            <person name="Clee C."/>
            <person name="Cobley V."/>
            <person name="Collier R.E."/>
            <person name="Corby N."/>
            <person name="Coville G.J."/>
            <person name="Davies J."/>
            <person name="Deadman R."/>
            <person name="Dunn M."/>
            <person name="Earthrowl M."/>
            <person name="Ellington A.G."/>
            <person name="Errington H."/>
            <person name="Frankish A."/>
            <person name="Frankland J."/>
            <person name="French L."/>
            <person name="Garner P."/>
            <person name="Garnett J."/>
            <person name="Gay L."/>
            <person name="Ghori M.R.J."/>
            <person name="Gibson R."/>
            <person name="Gilby L.M."/>
            <person name="Gillett W."/>
            <person name="Glithero R.J."/>
            <person name="Grafham D.V."/>
            <person name="Griffiths C."/>
            <person name="Griffiths-Jones S."/>
            <person name="Grocock R."/>
            <person name="Hammond S."/>
            <person name="Harrison E.S.I."/>
            <person name="Hart E."/>
            <person name="Haugen E."/>
            <person name="Heath P.D."/>
            <person name="Holmes S."/>
            <person name="Holt K."/>
            <person name="Howden P.J."/>
            <person name="Hunt A.R."/>
            <person name="Hunt S.E."/>
            <person name="Hunter G."/>
            <person name="Isherwood J."/>
            <person name="James R."/>
            <person name="Johnson C."/>
            <person name="Johnson D."/>
            <person name="Joy A."/>
            <person name="Kay M."/>
            <person name="Kershaw J.K."/>
            <person name="Kibukawa M."/>
            <person name="Kimberley A.M."/>
            <person name="King A."/>
            <person name="Knights A.J."/>
            <person name="Lad H."/>
            <person name="Laird G."/>
            <person name="Lawlor S."/>
            <person name="Leongamornlert D.A."/>
            <person name="Lloyd D.M."/>
            <person name="Loveland J."/>
            <person name="Lovell J."/>
            <person name="Lush M.J."/>
            <person name="Lyne R."/>
            <person name="Martin S."/>
            <person name="Mashreghi-Mohammadi M."/>
            <person name="Matthews L."/>
            <person name="Matthews N.S.W."/>
            <person name="McLaren S."/>
            <person name="Milne S."/>
            <person name="Mistry S."/>
            <person name="Moore M.J.F."/>
            <person name="Nickerson T."/>
            <person name="O'Dell C.N."/>
            <person name="Oliver K."/>
            <person name="Palmeiri A."/>
            <person name="Palmer S.A."/>
            <person name="Parker A."/>
            <person name="Patel D."/>
            <person name="Pearce A.V."/>
            <person name="Peck A.I."/>
            <person name="Pelan S."/>
            <person name="Phelps K."/>
            <person name="Phillimore B.J."/>
            <person name="Plumb R."/>
            <person name="Rajan J."/>
            <person name="Raymond C."/>
            <person name="Rouse G."/>
            <person name="Saenphimmachak C."/>
            <person name="Sehra H.K."/>
            <person name="Sheridan E."/>
            <person name="Shownkeen R."/>
            <person name="Sims S."/>
            <person name="Skuce C.D."/>
            <person name="Smith M."/>
            <person name="Steward C."/>
            <person name="Subramanian S."/>
            <person name="Sycamore N."/>
            <person name="Tracey A."/>
            <person name="Tromans A."/>
            <person name="Van Helmond Z."/>
            <person name="Wall M."/>
            <person name="Wallis J.M."/>
            <person name="White S."/>
            <person name="Whitehead S.L."/>
            <person name="Wilkinson J.E."/>
            <person name="Willey D.L."/>
            <person name="Williams H."/>
            <person name="Wilming L."/>
            <person name="Wray P.W."/>
            <person name="Wu Z."/>
            <person name="Coulson A."/>
            <person name="Vaudin M."/>
            <person name="Sulston J.E."/>
            <person name="Durbin R.M."/>
            <person name="Hubbard T."/>
            <person name="Wooster R."/>
            <person name="Dunham I."/>
            <person name="Carter N.P."/>
            <person name="McVean G."/>
            <person name="Ross M.T."/>
            <person name="Harrow J."/>
            <person name="Olson M.V."/>
            <person name="Beck S."/>
            <person name="Rogers J."/>
            <person name="Bentley D.R."/>
        </authorList>
    </citation>
    <scope>NUCLEOTIDE SEQUENCE [LARGE SCALE GENOMIC DNA]</scope>
</reference>
<reference key="6">
    <citation type="submission" date="2005-09" db="EMBL/GenBank/DDBJ databases">
        <authorList>
            <person name="Mural R.J."/>
            <person name="Istrail S."/>
            <person name="Sutton G.G."/>
            <person name="Florea L."/>
            <person name="Halpern A.L."/>
            <person name="Mobarry C.M."/>
            <person name="Lippert R."/>
            <person name="Walenz B."/>
            <person name="Shatkay H."/>
            <person name="Dew I."/>
            <person name="Miller J.R."/>
            <person name="Flanigan M.J."/>
            <person name="Edwards N.J."/>
            <person name="Bolanos R."/>
            <person name="Fasulo D."/>
            <person name="Halldorsson B.V."/>
            <person name="Hannenhalli S."/>
            <person name="Turner R."/>
            <person name="Yooseph S."/>
            <person name="Lu F."/>
            <person name="Nusskern D.R."/>
            <person name="Shue B.C."/>
            <person name="Zheng X.H."/>
            <person name="Zhong F."/>
            <person name="Delcher A.L."/>
            <person name="Huson D.H."/>
            <person name="Kravitz S.A."/>
            <person name="Mouchard L."/>
            <person name="Reinert K."/>
            <person name="Remington K.A."/>
            <person name="Clark A.G."/>
            <person name="Waterman M.S."/>
            <person name="Eichler E.E."/>
            <person name="Adams M.D."/>
            <person name="Hunkapiller M.W."/>
            <person name="Myers E.W."/>
            <person name="Venter J.C."/>
        </authorList>
    </citation>
    <scope>NUCLEOTIDE SEQUENCE [LARGE SCALE GENOMIC DNA]</scope>
</reference>
<reference key="7">
    <citation type="journal article" date="2004" name="Genome Res.">
        <title>The status, quality, and expansion of the NIH full-length cDNA project: the Mammalian Gene Collection (MGC).</title>
        <authorList>
            <consortium name="The MGC Project Team"/>
        </authorList>
    </citation>
    <scope>NUCLEOTIDE SEQUENCE [LARGE SCALE MRNA] (ISOFORM 1)</scope>
    <source>
        <tissue>Lung</tissue>
    </source>
</reference>
<reference key="8">
    <citation type="journal article" date="2006" name="Nat. Biotechnol.">
        <title>A probability-based approach for high-throughput protein phosphorylation analysis and site localization.</title>
        <authorList>
            <person name="Beausoleil S.A."/>
            <person name="Villen J."/>
            <person name="Gerber S.A."/>
            <person name="Rush J."/>
            <person name="Gygi S.P."/>
        </authorList>
    </citation>
    <scope>PHOSPHORYLATION [LARGE SCALE ANALYSIS] AT SER-182 AND SER-375</scope>
    <scope>IDENTIFICATION BY MASS SPECTROMETRY [LARGE SCALE ANALYSIS]</scope>
    <source>
        <tissue>Cervix carcinoma</tissue>
    </source>
</reference>
<reference key="9">
    <citation type="journal article" date="2008" name="Biochem. Biophys. Res. Commun.">
        <title>BCAR3 regulates EGF-induced DNA synthesis in normal human breast MCF-12A cells.</title>
        <authorList>
            <person name="Oh M.J."/>
            <person name="van Agthoven T."/>
            <person name="Choi J.E."/>
            <person name="Jeong Y.J."/>
            <person name="Chung Y.H."/>
            <person name="Kim C.M."/>
            <person name="Jhun B.H."/>
        </authorList>
    </citation>
    <scope>FUNCTION</scope>
    <scope>INTERACTION WITH BCAR1 AND EGFR</scope>
</reference>
<reference key="10">
    <citation type="journal article" date="2008" name="Proc. Natl. Acad. Sci. U.S.A.">
        <title>A quantitative atlas of mitotic phosphorylation.</title>
        <authorList>
            <person name="Dephoure N."/>
            <person name="Zhou C."/>
            <person name="Villen J."/>
            <person name="Beausoleil S.A."/>
            <person name="Bakalarski C.E."/>
            <person name="Elledge S.J."/>
            <person name="Gygi S.P."/>
        </authorList>
    </citation>
    <scope>PHOSPHORYLATION [LARGE SCALE ANALYSIS] AT SER-32; SER-83; SER-290; SER-358; SER-363 AND SER-375</scope>
    <scope>IDENTIFICATION BY MASS SPECTROMETRY [LARGE SCALE ANALYSIS]</scope>
    <source>
        <tissue>Cervix carcinoma</tissue>
    </source>
</reference>
<reference key="11">
    <citation type="journal article" date="2009" name="J. Cell. Physiol.">
        <title>Pyk2 mediates endothelin-1 signaling via p130Cas/BCAR3 cascade and regulates human glomerular mesangial cell adhesion and spreading.</title>
        <authorList>
            <person name="Rufanova V.A."/>
            <person name="Alexanian A."/>
            <person name="Wakatsuki T."/>
            <person name="Lerner A."/>
            <person name="Sorokin A."/>
        </authorList>
    </citation>
    <scope>FUNCTION</scope>
    <scope>INTERACTION WITH BCAR1</scope>
</reference>
<reference key="12">
    <citation type="journal article" date="2009" name="J. Mol. Biol.">
        <title>Structural insights into the association between BCAR3 and Cas family members, an atypical complex implicated in anti-oestrogen resistance.</title>
        <authorList>
            <person name="Garron M.L."/>
            <person name="Arsenieva D."/>
            <person name="Zhong J."/>
            <person name="Bloom A.B."/>
            <person name="Lerner A."/>
            <person name="O'Neill G.M."/>
            <person name="Arold S.T."/>
        </authorList>
    </citation>
    <scope>INTERACTION WITH NEDD9</scope>
</reference>
<reference key="13">
    <citation type="journal article" date="2009" name="Sci. Signal.">
        <title>Quantitative phosphoproteomic analysis of T cell receptor signaling reveals system-wide modulation of protein-protein interactions.</title>
        <authorList>
            <person name="Mayya V."/>
            <person name="Lundgren D.H."/>
            <person name="Hwang S.-I."/>
            <person name="Rezaul K."/>
            <person name="Wu L."/>
            <person name="Eng J.K."/>
            <person name="Rodionov V."/>
            <person name="Han D.K."/>
        </authorList>
    </citation>
    <scope>IDENTIFICATION BY MASS SPECTROMETRY [LARGE SCALE ANALYSIS]</scope>
    <source>
        <tissue>Leukemic T-cell</tissue>
    </source>
</reference>
<reference key="14">
    <citation type="journal article" date="2010" name="Sci. Signal.">
        <title>Quantitative phosphoproteomics reveals widespread full phosphorylation site occupancy during mitosis.</title>
        <authorList>
            <person name="Olsen J.V."/>
            <person name="Vermeulen M."/>
            <person name="Santamaria A."/>
            <person name="Kumar C."/>
            <person name="Miller M.L."/>
            <person name="Jensen L.J."/>
            <person name="Gnad F."/>
            <person name="Cox J."/>
            <person name="Jensen T.S."/>
            <person name="Nigg E.A."/>
            <person name="Brunak S."/>
            <person name="Mann M."/>
        </authorList>
    </citation>
    <scope>IDENTIFICATION BY MASS SPECTROMETRY [LARGE SCALE ANALYSIS]</scope>
    <source>
        <tissue>Cervix carcinoma</tissue>
    </source>
</reference>
<reference key="15">
    <citation type="journal article" date="2012" name="Mol. Cell. Biol.">
        <title>Protein tyrosine phosphatase alpha phosphotyrosyl-789 binds BCAR3 to position Cas for activation at integrin-mediated focal adhesions.</title>
        <authorList>
            <person name="Sun G."/>
            <person name="Cheng S.Y."/>
            <person name="Chen M."/>
            <person name="Lim C.J."/>
            <person name="Pallen C.J."/>
        </authorList>
    </citation>
    <scope>IDENTIFICATION IN A COMPLEX WITH PTPRA; BCAR1 AND SRC</scope>
    <scope>MUTAGENESIS OF ARG-177 AND ARG-748</scope>
</reference>
<reference key="16">
    <citation type="journal article" date="2012" name="Proc. Natl. Acad. Sci. U.S.A.">
        <title>N-terminal acetylome analyses and functional insights of the N-terminal acetyltransferase NatB.</title>
        <authorList>
            <person name="Van Damme P."/>
            <person name="Lasa M."/>
            <person name="Polevoda B."/>
            <person name="Gazquez C."/>
            <person name="Elosegui-Artola A."/>
            <person name="Kim D.S."/>
            <person name="De Juan-Pardo E."/>
            <person name="Demeyer K."/>
            <person name="Hole K."/>
            <person name="Larrea E."/>
            <person name="Timmerman E."/>
            <person name="Prieto J."/>
            <person name="Arnesen T."/>
            <person name="Sherman F."/>
            <person name="Gevaert K."/>
            <person name="Aldabe R."/>
        </authorList>
    </citation>
    <scope>ACETYLATION [LARGE SCALE ANALYSIS] AT ALA-2</scope>
    <scope>CLEAVAGE OF INITIATOR METHIONINE [LARGE SCALE ANALYSIS]</scope>
    <scope>IDENTIFICATION BY MASS SPECTROMETRY [LARGE SCALE ANALYSIS]</scope>
</reference>
<reference key="17">
    <citation type="journal article" date="2013" name="Biochem. Biophys. Res. Commun.">
        <title>Functional roles of BCAR3 in the signaling pathways of insulin leading to DNA synthesis, membrane ruffling and GLUT4 translocation.</title>
        <authorList>
            <person name="Oh M.J."/>
            <person name="Yi S.J."/>
            <person name="Kim H.S."/>
            <person name="Kim J.H."/>
            <person name="Jeong Y.H."/>
            <person name="van Agthoven T."/>
            <person name="Jhun B.H."/>
        </authorList>
    </citation>
    <scope>FUNCTION</scope>
</reference>
<reference key="18">
    <citation type="journal article" date="2013" name="J. Proteome Res.">
        <title>Toward a comprehensive characterization of a human cancer cell phosphoproteome.</title>
        <authorList>
            <person name="Zhou H."/>
            <person name="Di Palma S."/>
            <person name="Preisinger C."/>
            <person name="Peng M."/>
            <person name="Polat A.N."/>
            <person name="Heck A.J."/>
            <person name="Mohammed S."/>
        </authorList>
    </citation>
    <scope>PHOSPHORYLATION [LARGE SCALE ANALYSIS] AT SER-78 AND SER-375</scope>
    <scope>IDENTIFICATION BY MASS SPECTROMETRY [LARGE SCALE ANALYSIS]</scope>
    <source>
        <tissue>Cervix carcinoma</tissue>
    </source>
</reference>
<reference key="19">
    <citation type="journal article" date="2014" name="J. Proteomics">
        <title>An enzyme assisted RP-RPLC approach for in-depth analysis of human liver phosphoproteome.</title>
        <authorList>
            <person name="Bian Y."/>
            <person name="Song C."/>
            <person name="Cheng K."/>
            <person name="Dong M."/>
            <person name="Wang F."/>
            <person name="Huang J."/>
            <person name="Sun D."/>
            <person name="Wang L."/>
            <person name="Ye M."/>
            <person name="Zou H."/>
        </authorList>
    </citation>
    <scope>IDENTIFICATION BY MASS SPECTROMETRY [LARGE SCALE ANALYSIS]</scope>
    <source>
        <tissue>Liver</tissue>
    </source>
</reference>
<reference key="20">
    <citation type="journal article" date="2014" name="Mol. Cell. Proteomics">
        <title>Immunoaffinity enrichment and mass spectrometry analysis of protein methylation.</title>
        <authorList>
            <person name="Guo A."/>
            <person name="Gu H."/>
            <person name="Zhou J."/>
            <person name="Mulhern D."/>
            <person name="Wang Y."/>
            <person name="Lee K.A."/>
            <person name="Yang V."/>
            <person name="Aguiar M."/>
            <person name="Kornhauser J."/>
            <person name="Jia X."/>
            <person name="Ren J."/>
            <person name="Beausoleil S.A."/>
            <person name="Silva J.C."/>
            <person name="Vemulapalli V."/>
            <person name="Bedford M.T."/>
            <person name="Comb M.J."/>
        </authorList>
    </citation>
    <scope>METHYLATION [LARGE SCALE ANALYSIS] AT LYS-334 AND ARG-442</scope>
    <scope>IDENTIFICATION BY MASS SPECTROMETRY [LARGE SCALE ANALYSIS]</scope>
    <source>
        <tissue>Colon carcinoma</tissue>
    </source>
</reference>
<reference evidence="18" key="21">
    <citation type="journal article" date="2011" name="Nat. Struct. Mol. Biol.">
        <title>NSP-Cas protein structures reveal a promiscuous interaction module in cell signaling.</title>
        <authorList>
            <person name="Mace P.D."/>
            <person name="Wallez Y."/>
            <person name="Dobaczewska M.K."/>
            <person name="Lee J.J."/>
            <person name="Robinson H."/>
            <person name="Pasquale E.B."/>
            <person name="Riedl S.J."/>
        </authorList>
    </citation>
    <scope>X-RAY CRYSTALLOGRAPHY (2.40 ANGSTROMS) OF 502-825</scope>
    <scope>FUNCTION</scope>
    <scope>INTERACTION WITH BCAR1</scope>
    <scope>MUTAGENESIS OF LEU-744 AND ARG-748</scope>
</reference>
<name>BCAR3_HUMAN</name>
<comment type="function">
    <text evidence="1 2 7 8 10 12">Acts as an adapter protein downstream of several growth factor receptors to promote cell proliferation, migration, and redistribution of actin fibers (PubMed:24216110). Specifically involved in INS/insulin signaling pathway by mediating MAPK1/ERK2-MAPK3/ERK1 activation and DNA synthesis (PubMed:24216110). Promotes insulin-mediated membrane ruffling (By similarity). In response to vasoconstrictor peptide EDN1, involved in the activation of RAP1 downstream of PTK2B via interaction with phosphorylated BCAR1 (PubMed:19086031). Inhibits cell migration and invasion via regulation of TGFB-mediated matrix digestion, actin filament rearrangement, and inhibition of invadopodia activity (By similarity). May inhibit TGFB-SMAD signaling, via facilitating BCAR1 and SMAD2 and/or SMAD3 interaction (By similarity). Regulates EGF-induced DNA synthesis (PubMed:18722344). Required for the maintenance of ocular lens morphology and structural integrity, potentially via regulation of focal adhesion complex signaling (By similarity). Acts upstream of PTPRA to regulate the localization of BCAR1 and PTPRA to focal adhesions, via regulation of SRC-mediated phosphorylation of PTPRA (By similarity). Positively regulates integrin-induced tyrosine phosphorylation of BCAR1 (By similarity). Acts as a guanine nucleotide exchange factor (GEF) for small GTPases RALA, RAP1A and RRAS (By similarity). However, in a contrasting study, lacks GEF activity towards RAP1 (PubMed:22081014).</text>
</comment>
<comment type="subunit">
    <text evidence="2 7 8 9 10 11">Part of a complex comprised of PTPRA, BCAR1, BCAR3 (via SH2 domain) and SRC; the formation of the complex is dependent on integrin mediated-tyrosine phosphorylation of PTPRA (PubMed:22801373). Within the complex, interacts (via SH2 domain) with PTPRA (when phosphorylated on 'Tyr-798') (PubMed:22801373). Interacts (via Ras-GEF domain) with BCAR1 (PubMed:18722344, PubMed:19086031, PubMed:22081014). Interacts (via Ras-GEF domain) with NEDD9 (PubMed:19103205). Interacts with PTK2/FAK1 (By similarity). Interacts with PTPN1. Interacts (via SH2 domain) with EGFR (when tyrosine-phosphorylated) (PubMed:18722344).</text>
</comment>
<comment type="interaction">
    <interactant intactId="EBI-702336">
        <id>O75815</id>
    </interactant>
    <interactant intactId="EBI-541426">
        <id>Q9BXS5</id>
        <label>AP1M1</label>
    </interactant>
    <organismsDiffer>false</organismsDiffer>
    <experiments>3</experiments>
</comment>
<comment type="interaction">
    <interactant intactId="EBI-702336">
        <id>O75815</id>
    </interactant>
    <interactant intactId="EBI-10961624">
        <id>Q2TAC2-2</id>
        <label>CCDC57</label>
    </interactant>
    <organismsDiffer>false</organismsDiffer>
    <experiments>3</experiments>
</comment>
<comment type="interaction">
    <interactant intactId="EBI-702336">
        <id>O75815</id>
    </interactant>
    <interactant intactId="EBI-641062">
        <id>P04626</id>
        <label>ERBB2</label>
    </interactant>
    <organismsDiffer>false</organismsDiffer>
    <experiments>2</experiments>
</comment>
<comment type="interaction">
    <interactant intactId="EBI-702336">
        <id>O75815</id>
    </interactant>
    <interactant intactId="EBI-400434">
        <id>P35637</id>
        <label>FUS</label>
    </interactant>
    <organismsDiffer>false</organismsDiffer>
    <experiments>3</experiments>
</comment>
<comment type="interaction">
    <interactant intactId="EBI-702336">
        <id>O75815</id>
    </interactant>
    <interactant intactId="EBI-1052570">
        <id>O95995</id>
        <label>GAS8</label>
    </interactant>
    <organismsDiffer>false</organismsDiffer>
    <experiments>3</experiments>
</comment>
<comment type="interaction">
    <interactant intactId="EBI-702336">
        <id>O75815</id>
    </interactant>
    <interactant intactId="EBI-517592">
        <id>P35568</id>
        <label>IRS1</label>
    </interactant>
    <organismsDiffer>false</organismsDiffer>
    <experiments>3</experiments>
</comment>
<comment type="interaction">
    <interactant intactId="EBI-702336">
        <id>O75815</id>
    </interactant>
    <interactant intactId="EBI-1379503">
        <id>P10721</id>
        <label>KIT</label>
    </interactant>
    <organismsDiffer>false</organismsDiffer>
    <experiments>3</experiments>
</comment>
<comment type="interaction">
    <interactant intactId="EBI-702336">
        <id>O75815</id>
    </interactant>
    <interactant intactId="EBI-2108053">
        <id>Q14511</id>
        <label>NEDD9</label>
    </interactant>
    <organismsDiffer>false</organismsDiffer>
    <experiments>5</experiments>
</comment>
<comment type="interaction">
    <interactant intactId="EBI-702336">
        <id>O75815</id>
    </interactant>
    <interactant intactId="EBI-9057006">
        <id>Q9UJX0</id>
        <label>OSGIN1</label>
    </interactant>
    <organismsDiffer>false</organismsDiffer>
    <experiments>4</experiments>
</comment>
<comment type="interaction">
    <interactant intactId="EBI-702336">
        <id>O75815</id>
    </interactant>
    <interactant intactId="EBI-7353612">
        <id>P57075-2</id>
        <label>UBASH3A</label>
    </interactant>
    <organismsDiffer>false</organismsDiffer>
    <experiments>3</experiments>
</comment>
<comment type="interaction">
    <interactant intactId="EBI-15953103">
        <id>O75815-1</id>
    </interactant>
    <interactant intactId="EBI-702093">
        <id>P56945</id>
        <label>BCAR1</label>
    </interactant>
    <organismsDiffer>false</organismsDiffer>
    <experiments>3</experiments>
</comment>
<comment type="subcellular location">
    <subcellularLocation>
        <location evidence="2">Cytoplasm</location>
    </subcellularLocation>
    <subcellularLocation>
        <location evidence="2">Cell junction</location>
        <location evidence="2">Focal adhesion</location>
    </subcellularLocation>
    <text evidence="2">Localization to focal adhesions depends on interaction with PTPRA.</text>
</comment>
<comment type="alternative products">
    <event type="alternative splicing"/>
    <isoform>
        <id>O75815-1</id>
        <name>1</name>
        <sequence type="displayed"/>
    </isoform>
    <isoform>
        <id>O75815-2</id>
        <name>2</name>
        <sequence type="described" ref="VSP_017814"/>
    </isoform>
    <isoform>
        <id>O75815-3</id>
        <name>3</name>
        <sequence type="described" ref="VSP_046716 VSP_046717"/>
    </isoform>
</comment>
<comment type="tissue specificity">
    <text evidence="6 13">Ubiquitously expressed. Found in several cancer cell lines, but not in nonmalignant breast tissue.</text>
</comment>
<comment type="domain">
    <text evidence="7 12">The SH2 domain mediates interaction with tyrosine-phosphorylated proteins (PubMed:18722344). However, not involved in the binding to phosphorylated BCAR1 (PubMed:18722344). Required for cell cycle progression in response to INS/insulin (PubMed:24216110). Required for regulation of EFR-induced DNA synthesis (PubMed:18722344).</text>
</comment>
<comment type="domain">
    <text evidence="10">The Ras-GEF domain appears to adopt a closed conformation rendering it incapable of carrying out canonical exchange factor function, this closed conformation is probably required for interaction with BCAR1.</text>
</comment>
<comment type="PTM">
    <text evidence="2">Phosphorylated on tyrosine residues.</text>
</comment>
<comment type="miscellaneous">
    <text evidence="12 13">Overexpression confers anti-estrogen resistance via RRAS-independent activation of the PI3K pathway, and activation of the cyclin D1 promoter in breast cancer cell lines (PubMed:9582273). Plays a role in insulin-mediated ERK activation and DNA synthesis in breast cancer cells (PubMed:24216110).</text>
</comment>
<comment type="caution">
    <text evidence="2 10">The guanine nucleotide exchange factor (GEF) activity is controversial. One study showed GEF activity towards RALA, RAP1A and RRAS (By similarity). However, in another study, a construct containing only the Ras-GEF domain lacks GEF activity towards RAP1 (PubMed:22081014).</text>
</comment>
<accession>O75815</accession>
<accession>D3DT43</accession>
<accession>Q5TEW3</accession>
<accession>Q6UW40</accession>
<accession>Q9BR50</accession>
<dbReference type="EMBL" id="U92715">
    <property type="protein sequence ID" value="AAC39777.1"/>
    <property type="molecule type" value="mRNA"/>
</dbReference>
<dbReference type="EMBL" id="AF124250">
    <property type="protein sequence ID" value="AAD28245.1"/>
    <property type="molecule type" value="mRNA"/>
</dbReference>
<dbReference type="EMBL" id="AY358996">
    <property type="protein sequence ID" value="AAQ89355.1"/>
    <property type="molecule type" value="mRNA"/>
</dbReference>
<dbReference type="EMBL" id="AL833121">
    <property type="status" value="NOT_ANNOTATED_CDS"/>
    <property type="molecule type" value="mRNA"/>
</dbReference>
<dbReference type="EMBL" id="AL049796">
    <property type="status" value="NOT_ANNOTATED_CDS"/>
    <property type="molecule type" value="Genomic_DNA"/>
</dbReference>
<dbReference type="EMBL" id="AL109613">
    <property type="status" value="NOT_ANNOTATED_CDS"/>
    <property type="molecule type" value="Genomic_DNA"/>
</dbReference>
<dbReference type="EMBL" id="AL359820">
    <property type="status" value="NOT_ANNOTATED_CDS"/>
    <property type="molecule type" value="Genomic_DNA"/>
</dbReference>
<dbReference type="EMBL" id="AL512488">
    <property type="status" value="NOT_ANNOTATED_CDS"/>
    <property type="molecule type" value="Genomic_DNA"/>
</dbReference>
<dbReference type="EMBL" id="CH471097">
    <property type="protein sequence ID" value="EAW73065.1"/>
    <property type="molecule type" value="Genomic_DNA"/>
</dbReference>
<dbReference type="EMBL" id="CH471097">
    <property type="protein sequence ID" value="EAW73066.1"/>
    <property type="molecule type" value="Genomic_DNA"/>
</dbReference>
<dbReference type="EMBL" id="CH471097">
    <property type="protein sequence ID" value="EAW73068.1"/>
    <property type="molecule type" value="Genomic_DNA"/>
</dbReference>
<dbReference type="EMBL" id="BC039895">
    <property type="protein sequence ID" value="AAH39895.1"/>
    <property type="molecule type" value="mRNA"/>
</dbReference>
<dbReference type="CCDS" id="CCDS58010.1">
    <molecule id="O75815-3"/>
</dbReference>
<dbReference type="CCDS" id="CCDS745.1">
    <molecule id="O75815-1"/>
</dbReference>
<dbReference type="CCDS" id="CCDS76181.1">
    <molecule id="O75815-2"/>
</dbReference>
<dbReference type="RefSeq" id="NP_001248337.1">
    <molecule id="O75815-1"/>
    <property type="nucleotide sequence ID" value="NM_001261408.2"/>
</dbReference>
<dbReference type="RefSeq" id="NP_001248338.1">
    <molecule id="O75815-1"/>
    <property type="nucleotide sequence ID" value="NM_001261409.1"/>
</dbReference>
<dbReference type="RefSeq" id="NP_001248339.1">
    <molecule id="O75815-3"/>
    <property type="nucleotide sequence ID" value="NM_001261410.2"/>
</dbReference>
<dbReference type="RefSeq" id="NP_001295180.1">
    <molecule id="O75815-2"/>
    <property type="nucleotide sequence ID" value="NM_001308251.1"/>
</dbReference>
<dbReference type="RefSeq" id="NP_001398972.1">
    <molecule id="O75815-1"/>
    <property type="nucleotide sequence ID" value="NM_001412043.1"/>
</dbReference>
<dbReference type="RefSeq" id="NP_001398973.1">
    <molecule id="O75815-1"/>
    <property type="nucleotide sequence ID" value="NM_001412044.1"/>
</dbReference>
<dbReference type="RefSeq" id="NP_001398974.1">
    <molecule id="O75815-1"/>
    <property type="nucleotide sequence ID" value="NM_001412045.1"/>
</dbReference>
<dbReference type="RefSeq" id="NP_001398975.1">
    <molecule id="O75815-1"/>
    <property type="nucleotide sequence ID" value="NM_001412046.1"/>
</dbReference>
<dbReference type="RefSeq" id="NP_001398977.1">
    <molecule id="O75815-1"/>
    <property type="nucleotide sequence ID" value="NM_001412048.1"/>
</dbReference>
<dbReference type="RefSeq" id="NP_001398978.1">
    <molecule id="O75815-1"/>
    <property type="nucleotide sequence ID" value="NM_001412049.1"/>
</dbReference>
<dbReference type="RefSeq" id="NP_001398979.1">
    <molecule id="O75815-1"/>
    <property type="nucleotide sequence ID" value="NM_001412050.1"/>
</dbReference>
<dbReference type="RefSeq" id="NP_001398980.1">
    <molecule id="O75815-1"/>
    <property type="nucleotide sequence ID" value="NM_001412051.1"/>
</dbReference>
<dbReference type="RefSeq" id="NP_001398981.1">
    <molecule id="O75815-1"/>
    <property type="nucleotide sequence ID" value="NM_001412052.1"/>
</dbReference>
<dbReference type="RefSeq" id="NP_003558.1">
    <molecule id="O75815-1"/>
    <property type="nucleotide sequence ID" value="NM_003567.4"/>
</dbReference>
<dbReference type="RefSeq" id="XP_016857969.1">
    <property type="nucleotide sequence ID" value="XM_017002480.1"/>
</dbReference>
<dbReference type="PDB" id="3T6A">
    <property type="method" value="X-ray"/>
    <property type="resolution" value="2.40 A"/>
    <property type="chains" value="A/B/C/D=502-825"/>
</dbReference>
<dbReference type="PDBsum" id="3T6A"/>
<dbReference type="SMR" id="O75815"/>
<dbReference type="BioGRID" id="114000">
    <property type="interactions" value="69"/>
</dbReference>
<dbReference type="DIP" id="DIP-33857N"/>
<dbReference type="FunCoup" id="O75815">
    <property type="interactions" value="227"/>
</dbReference>
<dbReference type="IntAct" id="O75815">
    <property type="interactions" value="50"/>
</dbReference>
<dbReference type="MINT" id="O75815"/>
<dbReference type="STRING" id="9606.ENSP00000260502"/>
<dbReference type="iPTMnet" id="O75815"/>
<dbReference type="PhosphoSitePlus" id="O75815"/>
<dbReference type="BioMuta" id="BCAR3"/>
<dbReference type="jPOST" id="O75815"/>
<dbReference type="MassIVE" id="O75815"/>
<dbReference type="PaxDb" id="9606-ENSP00000359264"/>
<dbReference type="PeptideAtlas" id="O75815"/>
<dbReference type="ProteomicsDB" id="50205">
    <molecule id="O75815-1"/>
</dbReference>
<dbReference type="ProteomicsDB" id="50206">
    <molecule id="O75815-2"/>
</dbReference>
<dbReference type="ProteomicsDB" id="65066"/>
<dbReference type="Pumba" id="O75815"/>
<dbReference type="Antibodypedia" id="2973">
    <property type="antibodies" value="168 antibodies from 33 providers"/>
</dbReference>
<dbReference type="DNASU" id="8412"/>
<dbReference type="Ensembl" id="ENST00000260502.11">
    <molecule id="O75815-1"/>
    <property type="protein sequence ID" value="ENSP00000260502.6"/>
    <property type="gene ID" value="ENSG00000137936.18"/>
</dbReference>
<dbReference type="Ensembl" id="ENST00000370243.1">
    <molecule id="O75815-1"/>
    <property type="protein sequence ID" value="ENSP00000359263.1"/>
    <property type="gene ID" value="ENSG00000137936.18"/>
</dbReference>
<dbReference type="Ensembl" id="ENST00000370244.5">
    <molecule id="O75815-1"/>
    <property type="protein sequence ID" value="ENSP00000359264.1"/>
    <property type="gene ID" value="ENSG00000137936.18"/>
</dbReference>
<dbReference type="Ensembl" id="ENST00000370247.7">
    <molecule id="O75815-3"/>
    <property type="protein sequence ID" value="ENSP00000359267.3"/>
    <property type="gene ID" value="ENSG00000137936.18"/>
</dbReference>
<dbReference type="Ensembl" id="ENST00000539242.5">
    <molecule id="O75815-2"/>
    <property type="protein sequence ID" value="ENSP00000441343.1"/>
    <property type="gene ID" value="ENSG00000137936.18"/>
</dbReference>
<dbReference type="GeneID" id="8412"/>
<dbReference type="KEGG" id="hsa:8412"/>
<dbReference type="MANE-Select" id="ENST00000260502.11">
    <property type="protein sequence ID" value="ENSP00000260502.6"/>
    <property type="RefSeq nucleotide sequence ID" value="NM_003567.4"/>
    <property type="RefSeq protein sequence ID" value="NP_003558.1"/>
</dbReference>
<dbReference type="UCSC" id="uc001dpx.6">
    <molecule id="O75815-1"/>
    <property type="organism name" value="human"/>
</dbReference>
<dbReference type="AGR" id="HGNC:973"/>
<dbReference type="CTD" id="8412"/>
<dbReference type="DisGeNET" id="8412"/>
<dbReference type="GeneCards" id="BCAR3"/>
<dbReference type="HGNC" id="HGNC:973">
    <property type="gene designation" value="BCAR3"/>
</dbReference>
<dbReference type="HPA" id="ENSG00000137936">
    <property type="expression patterns" value="Low tissue specificity"/>
</dbReference>
<dbReference type="MIM" id="604704">
    <property type="type" value="gene"/>
</dbReference>
<dbReference type="neXtProt" id="NX_O75815"/>
<dbReference type="OpenTargets" id="ENSG00000137936"/>
<dbReference type="PharmGKB" id="PA25283"/>
<dbReference type="VEuPathDB" id="HostDB:ENSG00000137936"/>
<dbReference type="eggNOG" id="ENOG502QPX3">
    <property type="taxonomic scope" value="Eukaryota"/>
</dbReference>
<dbReference type="GeneTree" id="ENSGT00940000154130"/>
<dbReference type="HOGENOM" id="CLU_015281_0_0_1"/>
<dbReference type="InParanoid" id="O75815"/>
<dbReference type="OMA" id="MDPAMEY"/>
<dbReference type="OrthoDB" id="2412973at2759"/>
<dbReference type="PAN-GO" id="O75815">
    <property type="GO annotations" value="1 GO annotation based on evolutionary models"/>
</dbReference>
<dbReference type="PhylomeDB" id="O75815"/>
<dbReference type="TreeFam" id="TF323756"/>
<dbReference type="PathwayCommons" id="O75815"/>
<dbReference type="SignaLink" id="O75815"/>
<dbReference type="BioGRID-ORCS" id="8412">
    <property type="hits" value="30 hits in 1150 CRISPR screens"/>
</dbReference>
<dbReference type="ChiTaRS" id="BCAR3">
    <property type="organism name" value="human"/>
</dbReference>
<dbReference type="EvolutionaryTrace" id="O75815"/>
<dbReference type="GeneWiki" id="BCAR3"/>
<dbReference type="GenomeRNAi" id="8412"/>
<dbReference type="Pharos" id="O75815">
    <property type="development level" value="Tbio"/>
</dbReference>
<dbReference type="PRO" id="PR:O75815"/>
<dbReference type="Proteomes" id="UP000005640">
    <property type="component" value="Chromosome 1"/>
</dbReference>
<dbReference type="RNAct" id="O75815">
    <property type="molecule type" value="protein"/>
</dbReference>
<dbReference type="Bgee" id="ENSG00000137936">
    <property type="expression patterns" value="Expressed in parotid gland and 192 other cell types or tissues"/>
</dbReference>
<dbReference type="ExpressionAtlas" id="O75815">
    <property type="expression patterns" value="baseline and differential"/>
</dbReference>
<dbReference type="GO" id="GO:0005737">
    <property type="term" value="C:cytoplasm"/>
    <property type="evidence" value="ECO:0007669"/>
    <property type="project" value="UniProtKB-SubCell"/>
</dbReference>
<dbReference type="GO" id="GO:0005925">
    <property type="term" value="C:focal adhesion"/>
    <property type="evidence" value="ECO:0000250"/>
    <property type="project" value="UniProtKB"/>
</dbReference>
<dbReference type="GO" id="GO:0016020">
    <property type="term" value="C:membrane"/>
    <property type="evidence" value="ECO:0000250"/>
    <property type="project" value="UniProtKB"/>
</dbReference>
<dbReference type="GO" id="GO:0005085">
    <property type="term" value="F:guanyl-nucleotide exchange factor activity"/>
    <property type="evidence" value="ECO:0007669"/>
    <property type="project" value="UniProtKB-KW"/>
</dbReference>
<dbReference type="GO" id="GO:0019900">
    <property type="term" value="F:kinase binding"/>
    <property type="evidence" value="ECO:0000353"/>
    <property type="project" value="UniProtKB"/>
</dbReference>
<dbReference type="GO" id="GO:0001784">
    <property type="term" value="F:phosphotyrosine residue binding"/>
    <property type="evidence" value="ECO:0000315"/>
    <property type="project" value="UniProtKB"/>
</dbReference>
<dbReference type="GO" id="GO:0086100">
    <property type="term" value="P:endothelin receptor signaling pathway"/>
    <property type="evidence" value="ECO:0000315"/>
    <property type="project" value="UniProtKB"/>
</dbReference>
<dbReference type="GO" id="GO:0007173">
    <property type="term" value="P:epidermal growth factor receptor signaling pathway"/>
    <property type="evidence" value="ECO:0000315"/>
    <property type="project" value="UniProtKB"/>
</dbReference>
<dbReference type="GO" id="GO:0008286">
    <property type="term" value="P:insulin receptor signaling pathway"/>
    <property type="evidence" value="ECO:0000315"/>
    <property type="project" value="UniProtKB"/>
</dbReference>
<dbReference type="GO" id="GO:0002089">
    <property type="term" value="P:lens morphogenesis in camera-type eye"/>
    <property type="evidence" value="ECO:0007669"/>
    <property type="project" value="Ensembl"/>
</dbReference>
<dbReference type="GO" id="GO:0008284">
    <property type="term" value="P:positive regulation of cell population proliferation"/>
    <property type="evidence" value="ECO:0000315"/>
    <property type="project" value="UniProtKB"/>
</dbReference>
<dbReference type="GO" id="GO:0043547">
    <property type="term" value="P:positive regulation of GTPase activity"/>
    <property type="evidence" value="ECO:0000315"/>
    <property type="project" value="UniProtKB"/>
</dbReference>
<dbReference type="GO" id="GO:0043410">
    <property type="term" value="P:positive regulation of MAPK cascade"/>
    <property type="evidence" value="ECO:0000315"/>
    <property type="project" value="UniProtKB"/>
</dbReference>
<dbReference type="GO" id="GO:0009410">
    <property type="term" value="P:response to xenobiotic stimulus"/>
    <property type="evidence" value="ECO:0000304"/>
    <property type="project" value="ProtInc"/>
</dbReference>
<dbReference type="GO" id="GO:0007165">
    <property type="term" value="P:signal transduction"/>
    <property type="evidence" value="ECO:0000304"/>
    <property type="project" value="ProtInc"/>
</dbReference>
<dbReference type="GO" id="GO:0007264">
    <property type="term" value="P:small GTPase-mediated signal transduction"/>
    <property type="evidence" value="ECO:0007669"/>
    <property type="project" value="InterPro"/>
</dbReference>
<dbReference type="CDD" id="cd00155">
    <property type="entry name" value="RasGEF"/>
    <property type="match status" value="1"/>
</dbReference>
<dbReference type="CDD" id="cd10337">
    <property type="entry name" value="SH2_BCAR3"/>
    <property type="match status" value="1"/>
</dbReference>
<dbReference type="FunFam" id="1.10.840.10:FF:000007">
    <property type="entry name" value="SH2 domain containing 3C (Predicted)"/>
    <property type="match status" value="1"/>
</dbReference>
<dbReference type="FunFam" id="3.30.505.10:FF:000013">
    <property type="entry name" value="SH2 domain-containing protein 3C isoform X1"/>
    <property type="match status" value="1"/>
</dbReference>
<dbReference type="Gene3D" id="1.10.840.10">
    <property type="entry name" value="Ras guanine-nucleotide exchange factors catalytic domain"/>
    <property type="match status" value="1"/>
</dbReference>
<dbReference type="Gene3D" id="3.30.505.10">
    <property type="entry name" value="SH2 domain"/>
    <property type="match status" value="1"/>
</dbReference>
<dbReference type="InterPro" id="IPR023578">
    <property type="entry name" value="Ras_GEF_dom_sf"/>
</dbReference>
<dbReference type="InterPro" id="IPR001895">
    <property type="entry name" value="RASGEF_cat_dom"/>
</dbReference>
<dbReference type="InterPro" id="IPR036964">
    <property type="entry name" value="RASGEF_cat_dom_sf"/>
</dbReference>
<dbReference type="InterPro" id="IPR000980">
    <property type="entry name" value="SH2"/>
</dbReference>
<dbReference type="InterPro" id="IPR051853">
    <property type="entry name" value="SH2-Ras-GEF_adapter"/>
</dbReference>
<dbReference type="InterPro" id="IPR036860">
    <property type="entry name" value="SH2_dom_sf"/>
</dbReference>
<dbReference type="InterPro" id="IPR044102">
    <property type="entry name" value="SH2_SHEP1/BCAR3/NSP1"/>
</dbReference>
<dbReference type="PANTHER" id="PTHR14247:SF10">
    <property type="entry name" value="BREAST CANCER ANTI-ESTROGEN RESISTANCE PROTEIN 3"/>
    <property type="match status" value="1"/>
</dbReference>
<dbReference type="PANTHER" id="PTHR14247">
    <property type="entry name" value="BREAST CANCER ANTI-ESTROGEN RESISTANCE PROTEIN 3 HOMOLOG-LIKE PROTEIN"/>
    <property type="match status" value="1"/>
</dbReference>
<dbReference type="Pfam" id="PF00617">
    <property type="entry name" value="RasGEF"/>
    <property type="match status" value="1"/>
</dbReference>
<dbReference type="Pfam" id="PF00017">
    <property type="entry name" value="SH2"/>
    <property type="match status" value="1"/>
</dbReference>
<dbReference type="SMART" id="SM00147">
    <property type="entry name" value="RasGEF"/>
    <property type="match status" value="1"/>
</dbReference>
<dbReference type="SMART" id="SM00252">
    <property type="entry name" value="SH2"/>
    <property type="match status" value="1"/>
</dbReference>
<dbReference type="SUPFAM" id="SSF48366">
    <property type="entry name" value="Ras GEF"/>
    <property type="match status" value="1"/>
</dbReference>
<dbReference type="SUPFAM" id="SSF55550">
    <property type="entry name" value="SH2 domain"/>
    <property type="match status" value="1"/>
</dbReference>
<dbReference type="PROSITE" id="PS50009">
    <property type="entry name" value="RASGEF_CAT"/>
    <property type="match status" value="1"/>
</dbReference>
<dbReference type="PROSITE" id="PS50001">
    <property type="entry name" value="SH2"/>
    <property type="match status" value="1"/>
</dbReference>
<keyword id="KW-0002">3D-structure</keyword>
<keyword id="KW-0007">Acetylation</keyword>
<keyword id="KW-0025">Alternative splicing</keyword>
<keyword id="KW-0965">Cell junction</keyword>
<keyword id="KW-0963">Cytoplasm</keyword>
<keyword id="KW-0344">Guanine-nucleotide releasing factor</keyword>
<keyword id="KW-0488">Methylation</keyword>
<keyword id="KW-0597">Phosphoprotein</keyword>
<keyword id="KW-1267">Proteomics identification</keyword>
<keyword id="KW-1185">Reference proteome</keyword>
<keyword id="KW-0727">SH2 domain</keyword>
<proteinExistence type="evidence at protein level"/>